<evidence type="ECO:0000255" key="1">
    <source>
        <dbReference type="HAMAP-Rule" id="MF_04066"/>
    </source>
</evidence>
<evidence type="ECO:0000256" key="2">
    <source>
        <dbReference type="SAM" id="MobiDB-lite"/>
    </source>
</evidence>
<name>NS1_I71A1</name>
<organismHost>
    <name type="scientific">Aves</name>
    <dbReference type="NCBI Taxonomy" id="8782"/>
</organismHost>
<organismHost>
    <name type="scientific">Cetacea</name>
    <name type="common">whales</name>
    <dbReference type="NCBI Taxonomy" id="9721"/>
</organismHost>
<organismHost>
    <name type="scientific">Homo sapiens</name>
    <name type="common">Human</name>
    <dbReference type="NCBI Taxonomy" id="9606"/>
</organismHost>
<organismHost>
    <name type="scientific">Phocidae</name>
    <name type="common">true seals</name>
    <dbReference type="NCBI Taxonomy" id="9709"/>
</organismHost>
<organismHost>
    <name type="scientific">Sus scrofa</name>
    <name type="common">Pig</name>
    <dbReference type="NCBI Taxonomy" id="9823"/>
</organismHost>
<sequence length="237" mass="26810">MDSNTVSSFQVDCFLWHVRKQVVDQELGDAPFLDRLRRDQKSLRGRGSTLGLNIEAATHVGKQIVERILKEESDEALKMTMASAPASRYLTDMTIEELSRDWFMLMPKQKVEGPLCIRIDQAIMDKNIMLKANFSVIFDRLETLILLRAFTEEGAIVGEISPLPSLPGHTIEDVKNAIGVLIGGLEWNDNTVRVSKTLQRFAWGSSNENGRPPLTPKQKRKMARTARSKVRRDKMAD</sequence>
<accession>Q3YPY9</accession>
<gene>
    <name evidence="1" type="primary">NS</name>
</gene>
<protein>
    <recommendedName>
        <fullName evidence="1">Non-structural protein 1</fullName>
        <shortName evidence="1">NS1</shortName>
    </recommendedName>
    <alternativeName>
        <fullName evidence="1">NS1A</fullName>
    </alternativeName>
</protein>
<organism>
    <name type="scientific">Influenza A virus (strain A/Memphis/1/1971 H3N2)</name>
    <dbReference type="NCBI Taxonomy" id="383586"/>
    <lineage>
        <taxon>Viruses</taxon>
        <taxon>Riboviria</taxon>
        <taxon>Orthornavirae</taxon>
        <taxon>Negarnaviricota</taxon>
        <taxon>Polyploviricotina</taxon>
        <taxon>Insthoviricetes</taxon>
        <taxon>Articulavirales</taxon>
        <taxon>Orthomyxoviridae</taxon>
        <taxon>Alphainfluenzavirus</taxon>
        <taxon>Alphainfluenzavirus influenzae</taxon>
        <taxon>Influenza A virus</taxon>
    </lineage>
</organism>
<reference key="1">
    <citation type="submission" date="2005-08" db="EMBL/GenBank/DDBJ databases">
        <title>The NIAID influenza genome sequencing project.</title>
        <authorList>
            <person name="Ghedin E."/>
            <person name="Spiro D."/>
            <person name="Miller N."/>
            <person name="Zaborsky J."/>
            <person name="Feldblyum T."/>
            <person name="Subbu V."/>
            <person name="Shumway M."/>
            <person name="Sparenborg J."/>
            <person name="Groveman L."/>
            <person name="Halpin R."/>
            <person name="Sitz J."/>
            <person name="Koo H."/>
            <person name="Salzberg S.L."/>
            <person name="Webster R.G."/>
            <person name="Hoffmann E."/>
            <person name="Krauss S."/>
            <person name="Naeve C."/>
            <person name="Bao Y."/>
            <person name="Bolotov P."/>
            <person name="Dernovoy D."/>
            <person name="Kiryutin B."/>
            <person name="Lipman D.J."/>
            <person name="Tatusova T."/>
        </authorList>
    </citation>
    <scope>NUCLEOTIDE SEQUENCE [GENOMIC RNA]</scope>
</reference>
<proteinExistence type="inferred from homology"/>
<keyword id="KW-0025">Alternative splicing</keyword>
<keyword id="KW-1262">Eukaryotic host gene expression shutoff by virus</keyword>
<keyword id="KW-1035">Host cytoplasm</keyword>
<keyword id="KW-1190">Host gene expression shutoff by virus</keyword>
<keyword id="KW-1192">Host mRNA suppression by virus</keyword>
<keyword id="KW-1048">Host nucleus</keyword>
<keyword id="KW-0945">Host-virus interaction</keyword>
<keyword id="KW-1090">Inhibition of host innate immune response by virus</keyword>
<keyword id="KW-1114">Inhibition of host interferon signaling pathway by virus</keyword>
<keyword id="KW-1102">Inhibition of host PKR by virus</keyword>
<keyword id="KW-1103">Inhibition of host pre-mRNA processing by virus</keyword>
<keyword id="KW-1088">Inhibition of host RIG-I by virus</keyword>
<keyword id="KW-1113">Inhibition of host RLR pathway by virus</keyword>
<keyword id="KW-0922">Interferon antiviral system evasion</keyword>
<keyword id="KW-0694">RNA-binding</keyword>
<keyword id="KW-0832">Ubl conjugation</keyword>
<keyword id="KW-0899">Viral immunoevasion</keyword>
<dbReference type="EMBL" id="CY002500">
    <property type="protein sequence ID" value="AAZ80012.1"/>
    <property type="molecule type" value="Genomic_RNA"/>
</dbReference>
<dbReference type="SMR" id="Q3YPY9"/>
<dbReference type="Proteomes" id="UP000154307">
    <property type="component" value="Genome"/>
</dbReference>
<dbReference type="GO" id="GO:0030430">
    <property type="term" value="C:host cell cytoplasm"/>
    <property type="evidence" value="ECO:0007669"/>
    <property type="project" value="UniProtKB-SubCell"/>
</dbReference>
<dbReference type="GO" id="GO:0042025">
    <property type="term" value="C:host cell nucleus"/>
    <property type="evidence" value="ECO:0007669"/>
    <property type="project" value="UniProtKB-SubCell"/>
</dbReference>
<dbReference type="GO" id="GO:0030291">
    <property type="term" value="F:protein serine/threonine kinase inhibitor activity"/>
    <property type="evidence" value="ECO:0007669"/>
    <property type="project" value="UniProtKB-KW"/>
</dbReference>
<dbReference type="GO" id="GO:0003723">
    <property type="term" value="F:RNA binding"/>
    <property type="evidence" value="ECO:0007669"/>
    <property type="project" value="UniProtKB-KW"/>
</dbReference>
<dbReference type="GO" id="GO:0039540">
    <property type="term" value="P:symbiont-mediated suppression of host cytoplasmic pattern recognition receptor signaling pathway via inhibition of RIG-I activity"/>
    <property type="evidence" value="ECO:0007669"/>
    <property type="project" value="UniProtKB-KW"/>
</dbReference>
<dbReference type="GO" id="GO:0039657">
    <property type="term" value="P:symbiont-mediated suppression of host gene expression"/>
    <property type="evidence" value="ECO:0007669"/>
    <property type="project" value="UniProtKB-KW"/>
</dbReference>
<dbReference type="GO" id="GO:0039524">
    <property type="term" value="P:symbiont-mediated suppression of host mRNA processing"/>
    <property type="evidence" value="ECO:0007669"/>
    <property type="project" value="UniProtKB-KW"/>
</dbReference>
<dbReference type="GO" id="GO:0039580">
    <property type="term" value="P:symbiont-mediated suppression of host PKR/eIFalpha signaling"/>
    <property type="evidence" value="ECO:0007669"/>
    <property type="project" value="UniProtKB-KW"/>
</dbReference>
<dbReference type="GO" id="GO:0039502">
    <property type="term" value="P:symbiont-mediated suppression of host type I interferon-mediated signaling pathway"/>
    <property type="evidence" value="ECO:0007669"/>
    <property type="project" value="UniProtKB-KW"/>
</dbReference>
<dbReference type="FunFam" id="1.10.287.10:FF:000001">
    <property type="entry name" value="Non-structural protein 1"/>
    <property type="match status" value="1"/>
</dbReference>
<dbReference type="FunFam" id="3.30.420.330:FF:000001">
    <property type="entry name" value="Non-structural protein 1"/>
    <property type="match status" value="1"/>
</dbReference>
<dbReference type="Gene3D" id="3.30.420.330">
    <property type="entry name" value="Influenza virus non-structural protein, effector domain"/>
    <property type="match status" value="1"/>
</dbReference>
<dbReference type="Gene3D" id="1.10.287.10">
    <property type="entry name" value="S15/NS1, RNA-binding"/>
    <property type="match status" value="1"/>
</dbReference>
<dbReference type="HAMAP" id="MF_04066">
    <property type="entry name" value="INFV_NS1"/>
    <property type="match status" value="1"/>
</dbReference>
<dbReference type="InterPro" id="IPR004208">
    <property type="entry name" value="NS1"/>
</dbReference>
<dbReference type="InterPro" id="IPR000256">
    <property type="entry name" value="NS1A"/>
</dbReference>
<dbReference type="InterPro" id="IPR038064">
    <property type="entry name" value="NS1A_effect_dom-like_sf"/>
</dbReference>
<dbReference type="InterPro" id="IPR009068">
    <property type="entry name" value="uS15_NS1_RNA-bd_sf"/>
</dbReference>
<dbReference type="Pfam" id="PF00600">
    <property type="entry name" value="Flu_NS1"/>
    <property type="match status" value="1"/>
</dbReference>
<dbReference type="SUPFAM" id="SSF143021">
    <property type="entry name" value="Ns1 effector domain-like"/>
    <property type="match status" value="1"/>
</dbReference>
<dbReference type="SUPFAM" id="SSF47060">
    <property type="entry name" value="S15/NS1 RNA-binding domain"/>
    <property type="match status" value="1"/>
</dbReference>
<feature type="chain" id="PRO_0000324249" description="Non-structural protein 1">
    <location>
        <begin position="1"/>
        <end position="237"/>
    </location>
</feature>
<feature type="region of interest" description="RNA-binding and homodimerization" evidence="1">
    <location>
        <begin position="1"/>
        <end position="73"/>
    </location>
</feature>
<feature type="region of interest" description="CPSF4-binding" evidence="1">
    <location>
        <begin position="180"/>
        <end position="215"/>
    </location>
</feature>
<feature type="region of interest" description="Disordered" evidence="2">
    <location>
        <begin position="205"/>
        <end position="237"/>
    </location>
</feature>
<feature type="region of interest" description="PABPN1-binding" evidence="1">
    <location>
        <begin position="223"/>
        <end position="230"/>
    </location>
</feature>
<feature type="short sequence motif" description="Nuclear localization signal" evidence="1">
    <location>
        <begin position="34"/>
        <end position="38"/>
    </location>
</feature>
<feature type="short sequence motif" description="Nuclear export signal" evidence="1">
    <location>
        <begin position="137"/>
        <end position="146"/>
    </location>
</feature>
<feature type="compositionally biased region" description="Basic residues" evidence="2">
    <location>
        <begin position="217"/>
        <end position="237"/>
    </location>
</feature>
<comment type="function">
    <text evidence="1">Inhibits post-transcriptional processing of cellular pre-mRNA, by binding and inhibiting two cellular proteins that are required for the 3'-end processing of cellular pre-mRNAs: the 30 kDa cleavage and polyadenylation specificity factor/CPSF4 and the poly(A)-binding protein 2/PABPN1. In turn, unprocessed 3' end pre-mRNAs accumulate in the host nucleus and are no longer exported to the cytoplasm. Cellular protein synthesis is thereby shut off very early after virus infection. Viral protein synthesis is not affected by the inhibition of the cellular 3' end processing machinery because the poly(A) tails of viral mRNAs are produced by the viral polymerase through a stuttering mechanism. Prevents the establishment of the cellular antiviral state by inhibiting TRIM25-mediated RIGI ubiquitination, which normally triggers the antiviral transduction signal that leads to the activation of type I IFN genes by transcription factors IRF3 and IRF7. Also binds poly(A) and U6 snRNA. Inhibits the integrated stress response (ISR) in the infected cell by blocking dsRNA binding by EIF2AK2/PKR and further phosphorylation of EIF2S1/EIF-2ALPHA. Stress granule formation is thus inhibited, which allows protein synthesis and viral replication.</text>
</comment>
<comment type="subunit">
    <text evidence="1">Homodimer. Interacts with host TRIM25 (via coiled coil); this interaction specifically inhibits TRIM25 multimerization and TRIM25-mediated RIGI CARD ubiquitination. Interacts with human EIF2AK2/PKR, CPSF4, IVNS1ABP and PABPN1.</text>
</comment>
<comment type="subcellular location">
    <subcellularLocation>
        <location evidence="1">Host nucleus</location>
    </subcellularLocation>
    <subcellularLocation>
        <location evidence="1">Host cytoplasm</location>
    </subcellularLocation>
    <text evidence="1">In uninfected, transfected cells, NS1 is localized in the nucleus. Only in virus infected cells, the nuclear export signal is unveiled, presumably by a viral protein, and a fraction of NS1 is exported in the cytoplasm.</text>
</comment>
<comment type="alternative products">
    <event type="alternative splicing"/>
    <isoform>
        <id>Q3YPY9-1</id>
        <name>NS1</name>
        <sequence type="displayed"/>
    </isoform>
    <isoform>
        <id>Q3YPZ0-1</id>
        <name>NEP</name>
        <name>NS2</name>
        <sequence type="external"/>
    </isoform>
</comment>
<comment type="domain">
    <text evidence="1">The dsRNA-binding region is required for suppression of RNA silencing.</text>
</comment>
<comment type="PTM">
    <text evidence="1">Upon interferon induction, ISGylated via host HERC5; this results in the impairment of NS1 interaction with RNA targets due to its inability to form homodimers and to interact with host EIF2AK2/PKR.</text>
</comment>
<comment type="similarity">
    <text evidence="1">Belongs to the influenza A viruses NS1 family.</text>
</comment>